<feature type="chain" id="PRO_0000206298" description="SEC1 family transport protein SLY1">
    <location>
        <begin position="1"/>
        <end position="627"/>
    </location>
</feature>
<feature type="region of interest" description="Disordered" evidence="2">
    <location>
        <begin position="526"/>
        <end position="551"/>
    </location>
</feature>
<feature type="compositionally biased region" description="Basic and acidic residues" evidence="2">
    <location>
        <begin position="527"/>
        <end position="541"/>
    </location>
</feature>
<organism>
    <name type="scientific">Arabidopsis thaliana</name>
    <name type="common">Mouse-ear cress</name>
    <dbReference type="NCBI Taxonomy" id="3702"/>
    <lineage>
        <taxon>Eukaryota</taxon>
        <taxon>Viridiplantae</taxon>
        <taxon>Streptophyta</taxon>
        <taxon>Embryophyta</taxon>
        <taxon>Tracheophyta</taxon>
        <taxon>Spermatophyta</taxon>
        <taxon>Magnoliopsida</taxon>
        <taxon>eudicotyledons</taxon>
        <taxon>Gunneridae</taxon>
        <taxon>Pentapetalae</taxon>
        <taxon>rosids</taxon>
        <taxon>malvids</taxon>
        <taxon>Brassicales</taxon>
        <taxon>Brassicaceae</taxon>
        <taxon>Camelineae</taxon>
        <taxon>Arabidopsis</taxon>
    </lineage>
</organism>
<dbReference type="EMBL" id="AC006201">
    <property type="protein sequence ID" value="AAD20128.1"/>
    <property type="molecule type" value="Genomic_DNA"/>
</dbReference>
<dbReference type="EMBL" id="CP002685">
    <property type="protein sequence ID" value="AEC06711.1"/>
    <property type="molecule type" value="Genomic_DNA"/>
</dbReference>
<dbReference type="EMBL" id="AY050414">
    <property type="protein sequence ID" value="AAK91430.1"/>
    <property type="molecule type" value="mRNA"/>
</dbReference>
<dbReference type="EMBL" id="AY059659">
    <property type="protein sequence ID" value="AAL31152.1"/>
    <property type="molecule type" value="mRNA"/>
</dbReference>
<dbReference type="PIR" id="G84558">
    <property type="entry name" value="G84558"/>
</dbReference>
<dbReference type="RefSeq" id="NP_179389.1">
    <property type="nucleotide sequence ID" value="NM_127354.5"/>
</dbReference>
<dbReference type="SMR" id="Q9SL48"/>
<dbReference type="BioGRID" id="1667">
    <property type="interactions" value="1"/>
</dbReference>
<dbReference type="FunCoup" id="Q9SL48">
    <property type="interactions" value="4986"/>
</dbReference>
<dbReference type="IntAct" id="Q9SL48">
    <property type="interactions" value="4"/>
</dbReference>
<dbReference type="STRING" id="3702.Q9SL48"/>
<dbReference type="GlyGen" id="Q9SL48">
    <property type="glycosylation" value="1 site"/>
</dbReference>
<dbReference type="iPTMnet" id="Q9SL48"/>
<dbReference type="PaxDb" id="3702-AT2G17980.1"/>
<dbReference type="ProteomicsDB" id="232639"/>
<dbReference type="EnsemblPlants" id="AT2G17980.1">
    <property type="protein sequence ID" value="AT2G17980.1"/>
    <property type="gene ID" value="AT2G17980"/>
</dbReference>
<dbReference type="GeneID" id="816310"/>
<dbReference type="Gramene" id="AT2G17980.1">
    <property type="protein sequence ID" value="AT2G17980.1"/>
    <property type="gene ID" value="AT2G17980"/>
</dbReference>
<dbReference type="KEGG" id="ath:AT2G17980"/>
<dbReference type="Araport" id="AT2G17980"/>
<dbReference type="TAIR" id="AT2G17980">
    <property type="gene designation" value="ATSLY1"/>
</dbReference>
<dbReference type="eggNOG" id="KOG1301">
    <property type="taxonomic scope" value="Eukaryota"/>
</dbReference>
<dbReference type="HOGENOM" id="CLU_016216_3_1_1"/>
<dbReference type="InParanoid" id="Q9SL48"/>
<dbReference type="OMA" id="VNDLRAW"/>
<dbReference type="OrthoDB" id="10251230at2759"/>
<dbReference type="PhylomeDB" id="Q9SL48"/>
<dbReference type="CD-CODE" id="4299E36E">
    <property type="entry name" value="Nucleolus"/>
</dbReference>
<dbReference type="PRO" id="PR:Q9SL48"/>
<dbReference type="Proteomes" id="UP000006548">
    <property type="component" value="Chromosome 2"/>
</dbReference>
<dbReference type="ExpressionAtlas" id="Q9SL48">
    <property type="expression patterns" value="baseline and differential"/>
</dbReference>
<dbReference type="GO" id="GO:0005739">
    <property type="term" value="C:mitochondrion"/>
    <property type="evidence" value="ECO:0007005"/>
    <property type="project" value="TAIR"/>
</dbReference>
<dbReference type="GO" id="GO:0015031">
    <property type="term" value="P:protein transport"/>
    <property type="evidence" value="ECO:0007669"/>
    <property type="project" value="UniProtKB-KW"/>
</dbReference>
<dbReference type="GO" id="GO:0016192">
    <property type="term" value="P:vesicle-mediated transport"/>
    <property type="evidence" value="ECO:0007669"/>
    <property type="project" value="InterPro"/>
</dbReference>
<dbReference type="FunFam" id="3.40.50.2060:FF:000002">
    <property type="entry name" value="sec1 family domain-containing protein 1"/>
    <property type="match status" value="1"/>
</dbReference>
<dbReference type="FunFam" id="1.25.40.60:FF:000014">
    <property type="entry name" value="SEC1 family transport protein SLY1"/>
    <property type="match status" value="1"/>
</dbReference>
<dbReference type="Gene3D" id="1.25.40.60">
    <property type="match status" value="1"/>
</dbReference>
<dbReference type="Gene3D" id="3.40.50.1910">
    <property type="match status" value="1"/>
</dbReference>
<dbReference type="Gene3D" id="3.40.50.2060">
    <property type="match status" value="1"/>
</dbReference>
<dbReference type="Gene3D" id="3.90.830.10">
    <property type="entry name" value="Syntaxin Binding Protein 1, Chain A, domain 2"/>
    <property type="match status" value="1"/>
</dbReference>
<dbReference type="InterPro" id="IPR043154">
    <property type="entry name" value="Sec-1-like_dom1"/>
</dbReference>
<dbReference type="InterPro" id="IPR043127">
    <property type="entry name" value="Sec-1-like_dom3a"/>
</dbReference>
<dbReference type="InterPro" id="IPR001619">
    <property type="entry name" value="Sec1-like"/>
</dbReference>
<dbReference type="InterPro" id="IPR027482">
    <property type="entry name" value="Sec1-like_dom2"/>
</dbReference>
<dbReference type="InterPro" id="IPR036045">
    <property type="entry name" value="Sec1-like_sf"/>
</dbReference>
<dbReference type="PANTHER" id="PTHR11679">
    <property type="entry name" value="VESICLE PROTEIN SORTING-ASSOCIATED"/>
    <property type="match status" value="1"/>
</dbReference>
<dbReference type="Pfam" id="PF00995">
    <property type="entry name" value="Sec1"/>
    <property type="match status" value="1"/>
</dbReference>
<dbReference type="PIRSF" id="PIRSF005715">
    <property type="entry name" value="VPS45_Sec1"/>
    <property type="match status" value="1"/>
</dbReference>
<dbReference type="SUPFAM" id="SSF56815">
    <property type="entry name" value="Sec1/munc18-like (SM) proteins"/>
    <property type="match status" value="1"/>
</dbReference>
<accession>Q9SL48</accession>
<gene>
    <name type="primary">SLY1</name>
    <name type="ordered locus">At2g17980</name>
    <name type="ORF">T27K22.15</name>
</gene>
<reference key="1">
    <citation type="journal article" date="1999" name="Nature">
        <title>Sequence and analysis of chromosome 2 of the plant Arabidopsis thaliana.</title>
        <authorList>
            <person name="Lin X."/>
            <person name="Kaul S."/>
            <person name="Rounsley S.D."/>
            <person name="Shea T.P."/>
            <person name="Benito M.-I."/>
            <person name="Town C.D."/>
            <person name="Fujii C.Y."/>
            <person name="Mason T.M."/>
            <person name="Bowman C.L."/>
            <person name="Barnstead M.E."/>
            <person name="Feldblyum T.V."/>
            <person name="Buell C.R."/>
            <person name="Ketchum K.A."/>
            <person name="Lee J.J."/>
            <person name="Ronning C.M."/>
            <person name="Koo H.L."/>
            <person name="Moffat K.S."/>
            <person name="Cronin L.A."/>
            <person name="Shen M."/>
            <person name="Pai G."/>
            <person name="Van Aken S."/>
            <person name="Umayam L."/>
            <person name="Tallon L.J."/>
            <person name="Gill J.E."/>
            <person name="Adams M.D."/>
            <person name="Carrera A.J."/>
            <person name="Creasy T.H."/>
            <person name="Goodman H.M."/>
            <person name="Somerville C.R."/>
            <person name="Copenhaver G.P."/>
            <person name="Preuss D."/>
            <person name="Nierman W.C."/>
            <person name="White O."/>
            <person name="Eisen J.A."/>
            <person name="Salzberg S.L."/>
            <person name="Fraser C.M."/>
            <person name="Venter J.C."/>
        </authorList>
    </citation>
    <scope>NUCLEOTIDE SEQUENCE [LARGE SCALE GENOMIC DNA]</scope>
    <source>
        <strain>cv. Columbia</strain>
    </source>
</reference>
<reference key="2">
    <citation type="journal article" date="2017" name="Plant J.">
        <title>Araport11: a complete reannotation of the Arabidopsis thaliana reference genome.</title>
        <authorList>
            <person name="Cheng C.Y."/>
            <person name="Krishnakumar V."/>
            <person name="Chan A.P."/>
            <person name="Thibaud-Nissen F."/>
            <person name="Schobel S."/>
            <person name="Town C.D."/>
        </authorList>
    </citation>
    <scope>GENOME REANNOTATION</scope>
    <source>
        <strain>cv. Columbia</strain>
    </source>
</reference>
<reference key="3">
    <citation type="journal article" date="2003" name="Science">
        <title>Empirical analysis of transcriptional activity in the Arabidopsis genome.</title>
        <authorList>
            <person name="Yamada K."/>
            <person name="Lim J."/>
            <person name="Dale J.M."/>
            <person name="Chen H."/>
            <person name="Shinn P."/>
            <person name="Palm C.J."/>
            <person name="Southwick A.M."/>
            <person name="Wu H.C."/>
            <person name="Kim C.J."/>
            <person name="Nguyen M."/>
            <person name="Pham P.K."/>
            <person name="Cheuk R.F."/>
            <person name="Karlin-Newmann G."/>
            <person name="Liu S.X."/>
            <person name="Lam B."/>
            <person name="Sakano H."/>
            <person name="Wu T."/>
            <person name="Yu G."/>
            <person name="Miranda M."/>
            <person name="Quach H.L."/>
            <person name="Tripp M."/>
            <person name="Chang C.H."/>
            <person name="Lee J.M."/>
            <person name="Toriumi M.J."/>
            <person name="Chan M.M."/>
            <person name="Tang C.C."/>
            <person name="Onodera C.S."/>
            <person name="Deng J.M."/>
            <person name="Akiyama K."/>
            <person name="Ansari Y."/>
            <person name="Arakawa T."/>
            <person name="Banh J."/>
            <person name="Banno F."/>
            <person name="Bowser L."/>
            <person name="Brooks S.Y."/>
            <person name="Carninci P."/>
            <person name="Chao Q."/>
            <person name="Choy N."/>
            <person name="Enju A."/>
            <person name="Goldsmith A.D."/>
            <person name="Gurjal M."/>
            <person name="Hansen N.F."/>
            <person name="Hayashizaki Y."/>
            <person name="Johnson-Hopson C."/>
            <person name="Hsuan V.W."/>
            <person name="Iida K."/>
            <person name="Karnes M."/>
            <person name="Khan S."/>
            <person name="Koesema E."/>
            <person name="Ishida J."/>
            <person name="Jiang P.X."/>
            <person name="Jones T."/>
            <person name="Kawai J."/>
            <person name="Kamiya A."/>
            <person name="Meyers C."/>
            <person name="Nakajima M."/>
            <person name="Narusaka M."/>
            <person name="Seki M."/>
            <person name="Sakurai T."/>
            <person name="Satou M."/>
            <person name="Tamse R."/>
            <person name="Vaysberg M."/>
            <person name="Wallender E.K."/>
            <person name="Wong C."/>
            <person name="Yamamura Y."/>
            <person name="Yuan S."/>
            <person name="Shinozaki K."/>
            <person name="Davis R.W."/>
            <person name="Theologis A."/>
            <person name="Ecker J.R."/>
        </authorList>
    </citation>
    <scope>NUCLEOTIDE SEQUENCE [LARGE SCALE MRNA]</scope>
    <source>
        <strain>cv. Columbia</strain>
    </source>
</reference>
<reference key="4">
    <citation type="journal article" date="2009" name="Plant Physiol.">
        <title>Large-scale Arabidopsis phosphoproteome profiling reveals novel chloroplast kinase substrates and phosphorylation networks.</title>
        <authorList>
            <person name="Reiland S."/>
            <person name="Messerli G."/>
            <person name="Baerenfaller K."/>
            <person name="Gerrits B."/>
            <person name="Endler A."/>
            <person name="Grossmann J."/>
            <person name="Gruissem W."/>
            <person name="Baginsky S."/>
        </authorList>
    </citation>
    <scope>IDENTIFICATION BY MASS SPECTROMETRY [LARGE SCALE ANALYSIS]</scope>
</reference>
<comment type="function">
    <text evidence="1">May be involved in the early secretory pathway.</text>
</comment>
<comment type="similarity">
    <text evidence="3">Belongs to the STXBP/unc-18/SEC1 family.</text>
</comment>
<name>SLY1_ARATH</name>
<protein>
    <recommendedName>
        <fullName>SEC1 family transport protein SLY1</fullName>
        <shortName>AtSLY1</shortName>
    </recommendedName>
</protein>
<evidence type="ECO:0000250" key="1"/>
<evidence type="ECO:0000256" key="2">
    <source>
        <dbReference type="SAM" id="MobiDB-lite"/>
    </source>
</evidence>
<evidence type="ECO:0000305" key="3"/>
<sequence>MALNLRQKQTECVIRMLNLNQPLNPSGTANEEVYKILIYDRFCQNILSPLTHVKDLRKHGVTLFFLIDKDRQPVHDVPAVYFVQPTESNLQRIIADASRSLYDTFHLNFSSSIPRKFLEELASGTLKSGSVEKVSKVHDQYLEFVTLEDNLFSLAQQSTYVQMNDPSAGEKEINEIIERVASGLFCVLVTLGVVPVIRCPSGGPAEMVASLLDQKLRDHLLSKNNLFTEGGGFMSSFQRPLLCIFDRNFELSVGIQHDFRYRPLVHDVLGLKLNQLKVQGEKGPPKSFELDSSDPFWSANSTLEFPDVAVEIETQLNKYKRDVEEVNKKTGGGSGAEFDGTDLIGNIHTEHLMNTVKSLPELTERKKVIDKHTNIATALLGQIKERSIDAFTKKESDMMMRGGIDRTELMAALKGKGTKMDKLRFAIMYLISTETINQSEVEAVEAALNEAEADTSAFQYVKKIKSLNASFAATSANSASRSNIVDWAEKLYGQSISAVTAGVKNLLSSDQQLAVTRTVEALTEGKPNPEIDSYRFLDPRAPKSSSSGGSHVKGPFREAIVFMIGGGNYVEYGSLQELTQRQLTVKNVIYGATEILNGGELVEQLGLLGKKMGLGGPVASTSLSGGH</sequence>
<keyword id="KW-0653">Protein transport</keyword>
<keyword id="KW-1185">Reference proteome</keyword>
<keyword id="KW-0813">Transport</keyword>
<proteinExistence type="evidence at protein level"/>